<protein>
    <recommendedName>
        <fullName evidence="2">Adipose-secreted signaling protein</fullName>
    </recommendedName>
</protein>
<proteinExistence type="evidence at transcript level"/>
<sequence>MAAAKKGAKPKVAGVRFAAGFPEEGAHNHVHFDEQLHDSVVMVSQQEDGNFLVKVGFLKILHKYEISFSLPPVQRLGKSICAVPLPTLNLKVLSITSQAEGHSIKCEYTAHKEGVLKEEMILASETNDKAFVKVVVQARVLDRHHGTPMLLEGVRCTGTELEYDSEQSDWHGFD</sequence>
<comment type="function">
    <text evidence="1">May be involved in thermogenesis and glucose homeostasis.</text>
</comment>
<comment type="subcellular location">
    <subcellularLocation>
        <location evidence="1">Secreted</location>
    </subcellularLocation>
</comment>
<comment type="similarity">
    <text evidence="3">Belongs to the ADISSP family.</text>
</comment>
<organism>
    <name type="scientific">Xenopus tropicalis</name>
    <name type="common">Western clawed frog</name>
    <name type="synonym">Silurana tropicalis</name>
    <dbReference type="NCBI Taxonomy" id="8364"/>
    <lineage>
        <taxon>Eukaryota</taxon>
        <taxon>Metazoa</taxon>
        <taxon>Chordata</taxon>
        <taxon>Craniata</taxon>
        <taxon>Vertebrata</taxon>
        <taxon>Euteleostomi</taxon>
        <taxon>Amphibia</taxon>
        <taxon>Batrachia</taxon>
        <taxon>Anura</taxon>
        <taxon>Pipoidea</taxon>
        <taxon>Pipidae</taxon>
        <taxon>Xenopodinae</taxon>
        <taxon>Xenopus</taxon>
        <taxon>Silurana</taxon>
    </lineage>
</organism>
<dbReference type="EMBL" id="BC079940">
    <property type="protein sequence ID" value="AAH79940.1"/>
    <property type="molecule type" value="mRNA"/>
</dbReference>
<dbReference type="RefSeq" id="NP_001007504.1">
    <property type="nucleotide sequence ID" value="NM_001007503.1"/>
</dbReference>
<dbReference type="FunCoup" id="Q68FA2">
    <property type="interactions" value="127"/>
</dbReference>
<dbReference type="STRING" id="8364.ENSXETP00000026365"/>
<dbReference type="PaxDb" id="8364-ENSXETP00000027863"/>
<dbReference type="DNASU" id="493230"/>
<dbReference type="GeneID" id="493230"/>
<dbReference type="KEGG" id="xtr:493230"/>
<dbReference type="AGR" id="Xenbase:XB-GENE-5956504"/>
<dbReference type="CTD" id="54976"/>
<dbReference type="Xenbase" id="XB-GENE-5956504">
    <property type="gene designation" value="adissp"/>
</dbReference>
<dbReference type="eggNOG" id="ENOG502RXJD">
    <property type="taxonomic scope" value="Eukaryota"/>
</dbReference>
<dbReference type="HOGENOM" id="CLU_094626_2_0_1"/>
<dbReference type="InParanoid" id="Q68FA2"/>
<dbReference type="OMA" id="GVRCIGM"/>
<dbReference type="OrthoDB" id="6246153at2759"/>
<dbReference type="TreeFam" id="TF323780"/>
<dbReference type="Proteomes" id="UP000008143">
    <property type="component" value="Chromosome 1"/>
</dbReference>
<dbReference type="GO" id="GO:0005615">
    <property type="term" value="C:extracellular space"/>
    <property type="evidence" value="ECO:0000250"/>
    <property type="project" value="UniProtKB"/>
</dbReference>
<dbReference type="InterPro" id="IPR026794">
    <property type="entry name" value="ADISSP"/>
</dbReference>
<dbReference type="PANTHER" id="PTHR13287">
    <property type="entry name" value="ADIPOSE-SECRETED SIGNALING PROTEIN"/>
    <property type="match status" value="1"/>
</dbReference>
<dbReference type="PANTHER" id="PTHR13287:SF2">
    <property type="entry name" value="ADIPOSE-SECRETED SIGNALING PROTEIN"/>
    <property type="match status" value="1"/>
</dbReference>
<dbReference type="Pfam" id="PF15006">
    <property type="entry name" value="DUF4517"/>
    <property type="match status" value="1"/>
</dbReference>
<accession>Q68FA2</accession>
<feature type="chain" id="PRO_0000359756" description="Adipose-secreted signaling protein">
    <location>
        <begin position="1"/>
        <end position="174"/>
    </location>
</feature>
<evidence type="ECO:0000250" key="1">
    <source>
        <dbReference type="UniProtKB" id="Q9D1K7"/>
    </source>
</evidence>
<evidence type="ECO:0000250" key="2">
    <source>
        <dbReference type="UniProtKB" id="Q9GZN8"/>
    </source>
</evidence>
<evidence type="ECO:0000305" key="3"/>
<name>ADSSP_XENTR</name>
<reference key="1">
    <citation type="submission" date="2004-08" db="EMBL/GenBank/DDBJ databases">
        <authorList>
            <consortium name="NIH - Xenopus Gene Collection (XGC) project"/>
        </authorList>
    </citation>
    <scope>NUCLEOTIDE SEQUENCE [LARGE SCALE MRNA]</scope>
    <source>
        <tissue>Embryo</tissue>
    </source>
</reference>
<gene>
    <name evidence="2" type="primary">adissp</name>
</gene>
<keyword id="KW-1185">Reference proteome</keyword>
<keyword id="KW-0964">Secreted</keyword>